<sequence>MSIVSISYNQEEYIREALDGFAAQRTEFPVEVIIADDASTDATPRIIGEYAARYPQLFRPILRQTNIGVHANFKDVLSAARGEYLALCEGDDYWTDPLKLSKQVKYLDRHPETTVCFHPVRVIYEDGAKDSEFPPLSWRRDLSVDALLARNFIQTNSVVYRRQPSYDDIPANVMPIDWYLHVRHAVGGEIAMLPETMAVYRRHAHGIWHSAYTDRRKFWETRGHGMAATLEAMLDLVHGHREREAIVGEVSAWVLREIGKTPGRQGRALLLKSIADHPRMTMLSLQHRWAQTPWRRFKRRLSTELSSLAALAYATRRRALEGRDGGYRETTSPPTGRGRNVRGSHA</sequence>
<dbReference type="EMBL" id="AE000516">
    <property type="protein sequence ID" value="AAK45837.1"/>
    <property type="status" value="ALT_INIT"/>
    <property type="molecule type" value="Genomic_DNA"/>
</dbReference>
<dbReference type="PIR" id="H70722">
    <property type="entry name" value="H70722"/>
</dbReference>
<dbReference type="RefSeq" id="WP_003407657.1">
    <property type="nucleotide sequence ID" value="NZ_KK341227.1"/>
</dbReference>
<dbReference type="SMR" id="P9WLV4"/>
<dbReference type="CAZy" id="GT2">
    <property type="family name" value="Glycosyltransferase Family 2"/>
</dbReference>
<dbReference type="KEGG" id="mtc:MT1570"/>
<dbReference type="PATRIC" id="fig|83331.31.peg.1691"/>
<dbReference type="HOGENOM" id="CLU_025996_4_2_11"/>
<dbReference type="Proteomes" id="UP000001020">
    <property type="component" value="Chromosome"/>
</dbReference>
<dbReference type="GO" id="GO:0016758">
    <property type="term" value="F:hexosyltransferase activity"/>
    <property type="evidence" value="ECO:0007669"/>
    <property type="project" value="UniProtKB-ARBA"/>
</dbReference>
<dbReference type="GO" id="GO:0009058">
    <property type="term" value="P:biosynthetic process"/>
    <property type="evidence" value="ECO:0007669"/>
    <property type="project" value="UniProtKB-ARBA"/>
</dbReference>
<dbReference type="FunFam" id="3.90.550.10:FF:000166">
    <property type="entry name" value="Probable sugar transferase"/>
    <property type="match status" value="1"/>
</dbReference>
<dbReference type="Gene3D" id="3.90.550.10">
    <property type="entry name" value="Spore Coat Polysaccharide Biosynthesis Protein SpsA, Chain A"/>
    <property type="match status" value="1"/>
</dbReference>
<dbReference type="InterPro" id="IPR001173">
    <property type="entry name" value="Glyco_trans_2-like"/>
</dbReference>
<dbReference type="InterPro" id="IPR029044">
    <property type="entry name" value="Nucleotide-diphossugar_trans"/>
</dbReference>
<dbReference type="PANTHER" id="PTHR22916">
    <property type="entry name" value="GLYCOSYLTRANSFERASE"/>
    <property type="match status" value="1"/>
</dbReference>
<dbReference type="PANTHER" id="PTHR22916:SF3">
    <property type="entry name" value="UDP-GLCNAC:BETAGAL BETA-1,3-N-ACETYLGLUCOSAMINYLTRANSFERASE-LIKE PROTEIN 1"/>
    <property type="match status" value="1"/>
</dbReference>
<dbReference type="Pfam" id="PF00535">
    <property type="entry name" value="Glycos_transf_2"/>
    <property type="match status" value="1"/>
</dbReference>
<dbReference type="SUPFAM" id="SSF53448">
    <property type="entry name" value="Nucleotide-diphospho-sugar transferases"/>
    <property type="match status" value="1"/>
</dbReference>
<gene>
    <name type="ordered locus">MT1570</name>
</gene>
<reference key="1">
    <citation type="journal article" date="2002" name="J. Bacteriol.">
        <title>Whole-genome comparison of Mycobacterium tuberculosis clinical and laboratory strains.</title>
        <authorList>
            <person name="Fleischmann R.D."/>
            <person name="Alland D."/>
            <person name="Eisen J.A."/>
            <person name="Carpenter L."/>
            <person name="White O."/>
            <person name="Peterson J.D."/>
            <person name="DeBoy R.T."/>
            <person name="Dodson R.J."/>
            <person name="Gwinn M.L."/>
            <person name="Haft D.H."/>
            <person name="Hickey E.K."/>
            <person name="Kolonay J.F."/>
            <person name="Nelson W.C."/>
            <person name="Umayam L.A."/>
            <person name="Ermolaeva M.D."/>
            <person name="Salzberg S.L."/>
            <person name="Delcher A."/>
            <person name="Utterback T.R."/>
            <person name="Weidman J.F."/>
            <person name="Khouri H.M."/>
            <person name="Gill J."/>
            <person name="Mikula A."/>
            <person name="Bishai W."/>
            <person name="Jacobs W.R. Jr."/>
            <person name="Venter J.C."/>
            <person name="Fraser C.M."/>
        </authorList>
    </citation>
    <scope>NUCLEOTIDE SEQUENCE [LARGE SCALE GENOMIC DNA]</scope>
    <source>
        <strain>CDC 1551 / Oshkosh</strain>
    </source>
</reference>
<protein>
    <recommendedName>
        <fullName>Uncharacterized protein MT1570</fullName>
    </recommendedName>
</protein>
<organism>
    <name type="scientific">Mycobacterium tuberculosis (strain CDC 1551 / Oshkosh)</name>
    <dbReference type="NCBI Taxonomy" id="83331"/>
    <lineage>
        <taxon>Bacteria</taxon>
        <taxon>Bacillati</taxon>
        <taxon>Actinomycetota</taxon>
        <taxon>Actinomycetes</taxon>
        <taxon>Mycobacteriales</taxon>
        <taxon>Mycobacteriaceae</taxon>
        <taxon>Mycobacterium</taxon>
        <taxon>Mycobacterium tuberculosis complex</taxon>
    </lineage>
</organism>
<feature type="chain" id="PRO_0000427413" description="Uncharacterized protein MT1570">
    <location>
        <begin position="1"/>
        <end position="346"/>
    </location>
</feature>
<feature type="region of interest" description="Disordered" evidence="1">
    <location>
        <begin position="322"/>
        <end position="346"/>
    </location>
</feature>
<accession>P9WLV4</accession>
<accession>L0T9N7</accession>
<accession>P64863</accession>
<accession>Q50587</accession>
<comment type="sequence caution" evidence="2">
    <conflict type="erroneous initiation">
        <sequence resource="EMBL-CDS" id="AAK45837"/>
    </conflict>
</comment>
<keyword id="KW-1185">Reference proteome</keyword>
<proteinExistence type="predicted"/>
<name>Y1520_MYCTO</name>
<evidence type="ECO:0000256" key="1">
    <source>
        <dbReference type="SAM" id="MobiDB-lite"/>
    </source>
</evidence>
<evidence type="ECO:0000305" key="2"/>